<organism>
    <name type="scientific">Desulfosudis oleivorans (strain DSM 6200 / JCM 39069 / Hxd3)</name>
    <name type="common">Desulfococcus oleovorans</name>
    <dbReference type="NCBI Taxonomy" id="96561"/>
    <lineage>
        <taxon>Bacteria</taxon>
        <taxon>Pseudomonadati</taxon>
        <taxon>Thermodesulfobacteriota</taxon>
        <taxon>Desulfobacteria</taxon>
        <taxon>Desulfobacterales</taxon>
        <taxon>Desulfosudaceae</taxon>
        <taxon>Desulfosudis</taxon>
    </lineage>
</organism>
<name>PYRF_DESOH</name>
<reference key="1">
    <citation type="submission" date="2007-10" db="EMBL/GenBank/DDBJ databases">
        <title>Complete sequence of Desulfococcus oleovorans Hxd3.</title>
        <authorList>
            <consortium name="US DOE Joint Genome Institute"/>
            <person name="Copeland A."/>
            <person name="Lucas S."/>
            <person name="Lapidus A."/>
            <person name="Barry K."/>
            <person name="Glavina del Rio T."/>
            <person name="Dalin E."/>
            <person name="Tice H."/>
            <person name="Pitluck S."/>
            <person name="Kiss H."/>
            <person name="Brettin T."/>
            <person name="Bruce D."/>
            <person name="Detter J.C."/>
            <person name="Han C."/>
            <person name="Schmutz J."/>
            <person name="Larimer F."/>
            <person name="Land M."/>
            <person name="Hauser L."/>
            <person name="Kyrpides N."/>
            <person name="Kim E."/>
            <person name="Wawrik B."/>
            <person name="Richardson P."/>
        </authorList>
    </citation>
    <scope>NUCLEOTIDE SEQUENCE [LARGE SCALE GENOMIC DNA]</scope>
    <source>
        <strain>DSM 6200 / JCM 39069 / Hxd3</strain>
    </source>
</reference>
<accession>A8ZWP0</accession>
<evidence type="ECO:0000255" key="1">
    <source>
        <dbReference type="HAMAP-Rule" id="MF_01200"/>
    </source>
</evidence>
<dbReference type="EC" id="4.1.1.23" evidence="1"/>
<dbReference type="EMBL" id="CP000859">
    <property type="protein sequence ID" value="ABW68371.1"/>
    <property type="molecule type" value="Genomic_DNA"/>
</dbReference>
<dbReference type="RefSeq" id="WP_012175983.1">
    <property type="nucleotide sequence ID" value="NC_009943.1"/>
</dbReference>
<dbReference type="SMR" id="A8ZWP0"/>
<dbReference type="STRING" id="96561.Dole_2568"/>
<dbReference type="KEGG" id="dol:Dole_2568"/>
<dbReference type="eggNOG" id="COG0284">
    <property type="taxonomic scope" value="Bacteria"/>
</dbReference>
<dbReference type="HOGENOM" id="CLU_067069_1_0_7"/>
<dbReference type="OrthoDB" id="9806203at2"/>
<dbReference type="UniPathway" id="UPA00070">
    <property type="reaction ID" value="UER00120"/>
</dbReference>
<dbReference type="Proteomes" id="UP000008561">
    <property type="component" value="Chromosome"/>
</dbReference>
<dbReference type="GO" id="GO:0005829">
    <property type="term" value="C:cytosol"/>
    <property type="evidence" value="ECO:0007669"/>
    <property type="project" value="TreeGrafter"/>
</dbReference>
<dbReference type="GO" id="GO:0004590">
    <property type="term" value="F:orotidine-5'-phosphate decarboxylase activity"/>
    <property type="evidence" value="ECO:0007669"/>
    <property type="project" value="UniProtKB-UniRule"/>
</dbReference>
<dbReference type="GO" id="GO:0006207">
    <property type="term" value="P:'de novo' pyrimidine nucleobase biosynthetic process"/>
    <property type="evidence" value="ECO:0007669"/>
    <property type="project" value="InterPro"/>
</dbReference>
<dbReference type="GO" id="GO:0044205">
    <property type="term" value="P:'de novo' UMP biosynthetic process"/>
    <property type="evidence" value="ECO:0007669"/>
    <property type="project" value="UniProtKB-UniRule"/>
</dbReference>
<dbReference type="CDD" id="cd04725">
    <property type="entry name" value="OMP_decarboxylase_like"/>
    <property type="match status" value="1"/>
</dbReference>
<dbReference type="Gene3D" id="3.20.20.70">
    <property type="entry name" value="Aldolase class I"/>
    <property type="match status" value="1"/>
</dbReference>
<dbReference type="HAMAP" id="MF_01200_B">
    <property type="entry name" value="OMPdecase_type1_B"/>
    <property type="match status" value="1"/>
</dbReference>
<dbReference type="InterPro" id="IPR013785">
    <property type="entry name" value="Aldolase_TIM"/>
</dbReference>
<dbReference type="InterPro" id="IPR014732">
    <property type="entry name" value="OMPdecase"/>
</dbReference>
<dbReference type="InterPro" id="IPR018089">
    <property type="entry name" value="OMPdecase_AS"/>
</dbReference>
<dbReference type="InterPro" id="IPR047596">
    <property type="entry name" value="OMPdecase_bac"/>
</dbReference>
<dbReference type="InterPro" id="IPR001754">
    <property type="entry name" value="OMPdeCOase_dom"/>
</dbReference>
<dbReference type="InterPro" id="IPR011060">
    <property type="entry name" value="RibuloseP-bd_barrel"/>
</dbReference>
<dbReference type="NCBIfam" id="NF001273">
    <property type="entry name" value="PRK00230.1"/>
    <property type="match status" value="1"/>
</dbReference>
<dbReference type="NCBIfam" id="TIGR01740">
    <property type="entry name" value="pyrF"/>
    <property type="match status" value="1"/>
</dbReference>
<dbReference type="PANTHER" id="PTHR32119">
    <property type="entry name" value="OROTIDINE 5'-PHOSPHATE DECARBOXYLASE"/>
    <property type="match status" value="1"/>
</dbReference>
<dbReference type="PANTHER" id="PTHR32119:SF2">
    <property type="entry name" value="OROTIDINE 5'-PHOSPHATE DECARBOXYLASE"/>
    <property type="match status" value="1"/>
</dbReference>
<dbReference type="Pfam" id="PF00215">
    <property type="entry name" value="OMPdecase"/>
    <property type="match status" value="1"/>
</dbReference>
<dbReference type="SMART" id="SM00934">
    <property type="entry name" value="OMPdecase"/>
    <property type="match status" value="1"/>
</dbReference>
<dbReference type="SUPFAM" id="SSF51366">
    <property type="entry name" value="Ribulose-phoshate binding barrel"/>
    <property type="match status" value="1"/>
</dbReference>
<dbReference type="PROSITE" id="PS00156">
    <property type="entry name" value="OMPDECASE"/>
    <property type="match status" value="1"/>
</dbReference>
<keyword id="KW-0210">Decarboxylase</keyword>
<keyword id="KW-0456">Lyase</keyword>
<keyword id="KW-0665">Pyrimidine biosynthesis</keyword>
<keyword id="KW-1185">Reference proteome</keyword>
<comment type="function">
    <text evidence="1">Catalyzes the decarboxylation of orotidine 5'-monophosphate (OMP) to uridine 5'-monophosphate (UMP).</text>
</comment>
<comment type="catalytic activity">
    <reaction evidence="1">
        <text>orotidine 5'-phosphate + H(+) = UMP + CO2</text>
        <dbReference type="Rhea" id="RHEA:11596"/>
        <dbReference type="ChEBI" id="CHEBI:15378"/>
        <dbReference type="ChEBI" id="CHEBI:16526"/>
        <dbReference type="ChEBI" id="CHEBI:57538"/>
        <dbReference type="ChEBI" id="CHEBI:57865"/>
        <dbReference type="EC" id="4.1.1.23"/>
    </reaction>
</comment>
<comment type="pathway">
    <text evidence="1">Pyrimidine metabolism; UMP biosynthesis via de novo pathway; UMP from orotate: step 2/2.</text>
</comment>
<comment type="subunit">
    <text evidence="1">Homodimer.</text>
</comment>
<comment type="similarity">
    <text evidence="1">Belongs to the OMP decarboxylase family. Type 1 subfamily.</text>
</comment>
<feature type="chain" id="PRO_1000138520" description="Orotidine 5'-phosphate decarboxylase">
    <location>
        <begin position="1"/>
        <end position="249"/>
    </location>
</feature>
<feature type="active site" description="Proton donor" evidence="1">
    <location>
        <position position="74"/>
    </location>
</feature>
<feature type="binding site" evidence="1">
    <location>
        <position position="21"/>
    </location>
    <ligand>
        <name>substrate</name>
    </ligand>
</feature>
<feature type="binding site" evidence="1">
    <location>
        <position position="43"/>
    </location>
    <ligand>
        <name>substrate</name>
    </ligand>
</feature>
<feature type="binding site" evidence="1">
    <location>
        <begin position="72"/>
        <end position="81"/>
    </location>
    <ligand>
        <name>substrate</name>
    </ligand>
</feature>
<feature type="binding site" evidence="1">
    <location>
        <position position="128"/>
    </location>
    <ligand>
        <name>substrate</name>
    </ligand>
</feature>
<feature type="binding site" evidence="1">
    <location>
        <position position="193"/>
    </location>
    <ligand>
        <name>substrate</name>
    </ligand>
</feature>
<feature type="binding site" evidence="1">
    <location>
        <position position="204"/>
    </location>
    <ligand>
        <name>substrate</name>
    </ligand>
</feature>
<feature type="binding site" evidence="1">
    <location>
        <position position="224"/>
    </location>
    <ligand>
        <name>substrate</name>
    </ligand>
</feature>
<feature type="binding site" evidence="1">
    <location>
        <position position="225"/>
    </location>
    <ligand>
        <name>substrate</name>
    </ligand>
</feature>
<sequence length="249" mass="26559">MTSIKTIKSRAPKDYLVFALDVPTVSEAAEYVHLLKNHVGMFKVGLELFVRGGRRIIDTIHDAGGGAKIFLDLKLYDIPETVYRTMNAIAAMGVDFATVHCSGQKDMLAAAQEGADGQVGVLGVTVLTSMSADDVRDAGYGPEYIENISRLVMKRAAAAAEWGFAGIVCSPLEVSAMKERFGKGFVAVTPGIRPAKGLVSRDDQSRISTPGQAIRNGADYLVVGRPIREPDDSAAAAAAICKEIEEALK</sequence>
<proteinExistence type="inferred from homology"/>
<gene>
    <name evidence="1" type="primary">pyrF</name>
    <name type="ordered locus">Dole_2568</name>
</gene>
<protein>
    <recommendedName>
        <fullName evidence="1">Orotidine 5'-phosphate decarboxylase</fullName>
        <ecNumber evidence="1">4.1.1.23</ecNumber>
    </recommendedName>
    <alternativeName>
        <fullName evidence="1">OMP decarboxylase</fullName>
        <shortName evidence="1">OMPDCase</shortName>
        <shortName evidence="1">OMPdecase</shortName>
    </alternativeName>
</protein>